<reference key="1">
    <citation type="journal article" date="1993" name="Science">
        <title>Isolation of the cyclosporin-sensitive T cell transcription factor NFATp.</title>
        <authorList>
            <person name="McCaffrey P.G."/>
            <person name="Luo C."/>
            <person name="Kerpolla T.K."/>
            <person name="Jain J."/>
            <person name="Badalian T.M."/>
            <person name="Ho A.M."/>
            <person name="Burgeon E."/>
            <person name="Lane W.S."/>
            <person name="Lambert J.N."/>
            <person name="Curran T."/>
            <person name="Verdine G.L."/>
            <person name="Rao A."/>
            <person name="Hogan P.G."/>
        </authorList>
    </citation>
    <scope>NUCLEOTIDE SEQUENCE [MRNA]</scope>
    <scope>PARTIAL PROTEIN SEQUENCE (ISOFORM A)</scope>
</reference>
<reference key="2">
    <citation type="journal article" date="1996" name="Mol. Cell. Biol.">
        <title>Recombinant NFAT1 (NFATp) is regulated by calcineurin in T cells and mediates transcription of several cytokine genes.</title>
        <authorList>
            <person name="Luo C."/>
            <person name="Burgeon E."/>
            <person name="Carew J.A."/>
            <person name="McCaffrey P.G."/>
            <person name="Badalian T.M."/>
            <person name="Lane W.S."/>
            <person name="Hogan P.G."/>
            <person name="Rao A."/>
        </authorList>
    </citation>
    <scope>NUCLEOTIDE SEQUENCE [MRNA] (ISOFORMS A; B AND C)</scope>
</reference>
<reference key="3">
    <citation type="journal article" date="2001" name="J. Biol. Chem.">
        <title>Identification and characterization of a novel nuclear factor of activated T-cells-1 isoform expressed in mouse brain.</title>
        <authorList>
            <person name="Plyte S."/>
            <person name="Boncristiano M."/>
            <person name="Fattori E."/>
            <person name="Galvagni F."/>
            <person name="Paccani S.R."/>
            <person name="Majolini M.B."/>
            <person name="Oliviero S."/>
            <person name="Ciliberto G."/>
            <person name="Telford J.L."/>
            <person name="Baldari C.T."/>
        </authorList>
    </citation>
    <scope>NUCLEOTIDE SEQUENCE [MRNA] (ISOFORM D)</scope>
    <source>
        <strain>C57BL/6J</strain>
        <tissue>Brain</tissue>
    </source>
</reference>
<reference key="4">
    <citation type="journal article" date="2008" name="Genomics">
        <title>Alternative splicing and expression of human and mouse NFAT genes.</title>
        <authorList>
            <person name="Vihma H."/>
            <person name="Pruunsild P."/>
            <person name="Timmusk T."/>
        </authorList>
    </citation>
    <scope>NUCLEOTIDE SEQUENCE [MRNA] (ISOFORM C)</scope>
    <scope>ALTERNATIVE SPLICING</scope>
    <scope>TISSUE SPECIFICITY</scope>
    <source>
        <strain>C57BL/6J</strain>
    </source>
</reference>
<reference key="5">
    <citation type="journal article" date="2009" name="PLoS Biol.">
        <title>Lineage-specific biology revealed by a finished genome assembly of the mouse.</title>
        <authorList>
            <person name="Church D.M."/>
            <person name="Goodstadt L."/>
            <person name="Hillier L.W."/>
            <person name="Zody M.C."/>
            <person name="Goldstein S."/>
            <person name="She X."/>
            <person name="Bult C.J."/>
            <person name="Agarwala R."/>
            <person name="Cherry J.L."/>
            <person name="DiCuccio M."/>
            <person name="Hlavina W."/>
            <person name="Kapustin Y."/>
            <person name="Meric P."/>
            <person name="Maglott D."/>
            <person name="Birtle Z."/>
            <person name="Marques A.C."/>
            <person name="Graves T."/>
            <person name="Zhou S."/>
            <person name="Teague B."/>
            <person name="Potamousis K."/>
            <person name="Churas C."/>
            <person name="Place M."/>
            <person name="Herschleb J."/>
            <person name="Runnheim R."/>
            <person name="Forrest D."/>
            <person name="Amos-Landgraf J."/>
            <person name="Schwartz D.C."/>
            <person name="Cheng Z."/>
            <person name="Lindblad-Toh K."/>
            <person name="Eichler E.E."/>
            <person name="Ponting C.P."/>
        </authorList>
    </citation>
    <scope>NUCLEOTIDE SEQUENCE [LARGE SCALE GENOMIC DNA]</scope>
    <source>
        <strain>C57BL/6J</strain>
    </source>
</reference>
<reference key="6">
    <citation type="journal article" date="1995" name="J. Biol. Chem.">
        <title>A similar DNA-binding motif in NFAT family proteins and the Rel homology region.</title>
        <authorList>
            <person name="Jain J."/>
            <person name="Burgeon E."/>
            <person name="Badalian T.M."/>
            <person name="Hogan P.G."/>
            <person name="Rao A."/>
        </authorList>
    </citation>
    <scope>MUTAGENESIS OF ARG-423; HIS-425; TYR-426; THR-428 AND GLU-429</scope>
</reference>
<reference key="7">
    <citation type="journal article" date="1996" name="Science">
        <title>NF-AT-driven interleukin-4 transcription potentiated by NIP45.</title>
        <authorList>
            <person name="Hodge M.R."/>
            <person name="Chun H.J."/>
            <person name="Rengarajan J."/>
            <person name="Alt A."/>
            <person name="Lieberson R."/>
            <person name="Glimcher L.H."/>
        </authorList>
    </citation>
    <scope>INTERACTION WITH NFATC2IP</scope>
</reference>
<reference key="8">
    <citation type="journal article" date="1998" name="Mol. Cell">
        <title>Selective inhibition of NFAT activation by a peptide spanning the calcineurin targeting site of NFAT.</title>
        <authorList>
            <person name="Aramburu J."/>
            <person name="Garcia-Cozar F."/>
            <person name="Raghavan A."/>
            <person name="Okamura H."/>
            <person name="Rao A."/>
            <person name="Hogan P.G."/>
        </authorList>
    </citation>
    <scope>MUTAGENESIS OF ARG-112; GLU-114 AND THR-116</scope>
</reference>
<reference key="9">
    <citation type="journal article" date="1999" name="Cell">
        <title>Generic signals and specific outcomes: signaling through Ca2+, calcineurin, and NF-AT.</title>
        <authorList>
            <person name="Crabtree G.R."/>
        </authorList>
    </citation>
    <scope>REVIEW</scope>
</reference>
<reference key="10">
    <citation type="journal article" date="2000" name="J. Exp. Med.">
        <title>The nuclear factor of activated T cells (NFAT) transcription factor NFATp (NFATc2) is a repressor of chondrogenesis.</title>
        <authorList>
            <person name="Ranger A.M."/>
            <person name="Gerstenfeld L.C."/>
            <person name="Wang J."/>
            <person name="Kon T."/>
            <person name="Bae H."/>
            <person name="Gravallese E.M."/>
            <person name="Glimcher M.J."/>
            <person name="Glimcher L.H."/>
        </authorList>
    </citation>
    <scope>DISRUPTION PHENOTYPE</scope>
    <scope>FUNCTION</scope>
    <scope>TISSUE SPECIFICITY</scope>
    <scope>DEVELOPMENTAL STAGE</scope>
</reference>
<reference key="11">
    <citation type="journal article" date="2000" name="Mol. Cell">
        <title>Concerted dephosphorylation of the transcription factor NFAT1 induces a conformational switch that regulates transcriptional activity.</title>
        <authorList>
            <person name="Okamura H."/>
            <person name="Aramburu J."/>
            <person name="Garcia-Rodriguez C."/>
            <person name="Viola J.P.B."/>
            <person name="Raghavan A."/>
            <person name="Tahiliani M."/>
            <person name="Zhang X."/>
            <person name="Qin J."/>
            <person name="Hogan P.G."/>
            <person name="Rao A."/>
        </authorList>
    </citation>
    <scope>PHOSPHORYLATION AT SER-99; SER-136; SER-170; SER-173; SER-174; SER-176; SER-177; SER-179; SER-182; SER-215; SER-219; SER-223; SER-238; SER-245; SER-270; SER-276; SER-278; SER-282; SER-328 AND SER-365</scope>
    <scope>SUBCELLULAR LOCATION</scope>
    <scope>INTERACTION WITH XPO1</scope>
    <scope>MUTAGENESIS OF ARG-164</scope>
    <scope>IDENTIFICATION BY MASS SPECTROMETRY</scope>
</reference>
<reference key="12">
    <citation type="journal article" date="2007" name="Dev. Biol.">
        <title>Dosage-dependent transcriptional regulation by the calcineurin/NFAT signaling in developing myocardium transition.</title>
        <authorList>
            <person name="Yang X.Y."/>
            <person name="Yang T.T.C."/>
            <person name="Schubert W."/>
            <person name="Factor S.M."/>
            <person name="Chow C.-W."/>
        </authorList>
    </citation>
    <scope>DEVELOPMENTAL STAGE</scope>
</reference>
<reference key="13">
    <citation type="journal article" date="2007" name="J. Immunol.">
        <title>Selective role of NFATc3 in positive selection of thymocytes.</title>
        <authorList>
            <person name="Cante-Barrett K."/>
            <person name="Winslow M.M."/>
            <person name="Crabtree G.R."/>
        </authorList>
    </citation>
    <scope>TISSUE SPECIFICITY</scope>
</reference>
<reference key="14">
    <citation type="journal article" date="2010" name="Cell">
        <title>A tissue-specific atlas of mouse protein phosphorylation and expression.</title>
        <authorList>
            <person name="Huttlin E.L."/>
            <person name="Jedrychowski M.P."/>
            <person name="Elias J.E."/>
            <person name="Goswami T."/>
            <person name="Rad R."/>
            <person name="Beausoleil S.A."/>
            <person name="Villen J."/>
            <person name="Haas W."/>
            <person name="Sowa M.E."/>
            <person name="Gygi S.P."/>
        </authorList>
    </citation>
    <scope>PHOSPHORYLATION [LARGE SCALE ANALYSIS] AT SER-136; SER-257 AND SER-365</scope>
    <scope>IDENTIFICATION BY MASS SPECTROMETRY [LARGE SCALE ANALYSIS]</scope>
    <source>
        <tissue>Brain</tissue>
        <tissue>Kidney</tissue>
        <tissue>Lung</tissue>
        <tissue>Spleen</tissue>
    </source>
</reference>
<reference key="15">
    <citation type="journal article" date="2013" name="J. Immunol.">
        <title>Lysine 313 of T-box is crucial for modulation of protein stability, DNA binding, and threonine phosphorylation of T-bet.</title>
        <authorList>
            <person name="Jang E.J."/>
            <person name="Park H.R."/>
            <person name="Hong J.H."/>
            <person name="Hwang E.S."/>
        </authorList>
    </citation>
    <scope>INTERACTION WITH TBX21</scope>
</reference>
<reference key="16">
    <citation type="journal article" date="2014" name="J. Innate Immun.">
        <title>The transcription factor nuclear factor of activated T cells c3 modulates the function of macrophages in sepsis.</title>
        <authorList>
            <person name="Ranjan R."/>
            <person name="Deng J."/>
            <person name="Chung S."/>
            <person name="Lee Y.G."/>
            <person name="Park G.Y."/>
            <person name="Xiao L."/>
            <person name="Joo M."/>
            <person name="Christman J.W."/>
            <person name="Karpurapu M."/>
        </authorList>
    </citation>
    <scope>SUBCELLULAR LOCATION</scope>
</reference>
<reference key="17">
    <citation type="journal article" date="2017" name="J. Immunol.">
        <title>The histone acetyltransferase Gcn5 positively regulates T cell activation.</title>
        <authorList>
            <person name="Gao B."/>
            <person name="Kong Q."/>
            <person name="Zhang Y."/>
            <person name="Yun C."/>
            <person name="Dent S.Y.R."/>
            <person name="Song J."/>
            <person name="Zhang D.D."/>
            <person name="Wang Y."/>
            <person name="Li X."/>
            <person name="Fang D."/>
        </authorList>
    </citation>
    <scope>INTERACTION WITH KAT2A</scope>
</reference>
<reference key="18">
    <citation type="journal article" date="2021" name="Proc. Natl. Acad. Sci. U.S.A.">
        <title>The N terminus of Orai1 couples to the AKAP79 signaling complex to drive NFAT1 activation by local Ca2+ entry.</title>
        <authorList>
            <person name="Kar P."/>
            <person name="Lin Y.P."/>
            <person name="Bhardwaj R."/>
            <person name="Tucker C.J."/>
            <person name="Bird G.S."/>
            <person name="Hediger M.A."/>
            <person name="Monico C."/>
            <person name="Amin N."/>
            <person name="Parekh A.B."/>
        </authorList>
    </citation>
    <scope>FUNCTION</scope>
    <scope>INTERACTION WITH AKAP5</scope>
</reference>
<reference key="19">
    <citation type="journal article" date="2020" name="Nat. Commun.">
        <title>The native ORAI channel trio underlies the diversity of Ca2+ signaling events.</title>
        <authorList>
            <person name="Yoast R.E."/>
            <person name="Emrich S.M."/>
            <person name="Zhang X."/>
            <person name="Xin P."/>
            <person name="Johnson M.T."/>
            <person name="Fike A.J."/>
            <person name="Walter V."/>
            <person name="Hempel N."/>
            <person name="Yule D.I."/>
            <person name="Sneyd J."/>
            <person name="Gill D.L."/>
            <person name="Trebak M."/>
        </authorList>
    </citation>
    <scope>FUNCTION</scope>
</reference>
<proteinExistence type="evidence at protein level"/>
<evidence type="ECO:0000250" key="1"/>
<evidence type="ECO:0000250" key="2">
    <source>
        <dbReference type="UniProtKB" id="Q13469"/>
    </source>
</evidence>
<evidence type="ECO:0000255" key="3">
    <source>
        <dbReference type="PROSITE-ProRule" id="PRU00265"/>
    </source>
</evidence>
<evidence type="ECO:0000256" key="4">
    <source>
        <dbReference type="SAM" id="MobiDB-lite"/>
    </source>
</evidence>
<evidence type="ECO:0000269" key="5">
    <source>
    </source>
</evidence>
<evidence type="ECO:0000269" key="6">
    <source>
    </source>
</evidence>
<evidence type="ECO:0000269" key="7">
    <source>
    </source>
</evidence>
<evidence type="ECO:0000269" key="8">
    <source>
    </source>
</evidence>
<evidence type="ECO:0000269" key="9">
    <source>
    </source>
</evidence>
<evidence type="ECO:0000269" key="10">
    <source>
    </source>
</evidence>
<evidence type="ECO:0000269" key="11">
    <source>
    </source>
</evidence>
<evidence type="ECO:0000269" key="12">
    <source>
    </source>
</evidence>
<evidence type="ECO:0000269" key="13">
    <source>
    </source>
</evidence>
<evidence type="ECO:0000269" key="14">
    <source>
    </source>
</evidence>
<evidence type="ECO:0000269" key="15">
    <source>
    </source>
</evidence>
<evidence type="ECO:0000269" key="16">
    <source>
    </source>
</evidence>
<evidence type="ECO:0000269" key="17">
    <source>
    </source>
</evidence>
<evidence type="ECO:0000303" key="18">
    <source>
    </source>
</evidence>
<evidence type="ECO:0000303" key="19">
    <source>
    </source>
</evidence>
<evidence type="ECO:0000305" key="20"/>
<evidence type="ECO:0000305" key="21">
    <source>
    </source>
</evidence>
<evidence type="ECO:0007744" key="22">
    <source>
    </source>
</evidence>
<accession>Q60591</accession>
<accession>A2APK2</accession>
<accession>A2APK3</accession>
<accession>A2AQC5</accession>
<accession>A2AQC6</accession>
<accession>A2AQC7</accession>
<accession>B5B2Q3</accession>
<accession>Q60984</accession>
<accession>Q60985</accession>
<accession>Q91Y65</accession>
<dbReference type="EMBL" id="U02079">
    <property type="protein sequence ID" value="AAC52929.1"/>
    <property type="status" value="ALT_SEQ"/>
    <property type="molecule type" value="mRNA"/>
</dbReference>
<dbReference type="EMBL" id="U36575">
    <property type="protein sequence ID" value="AAC52930.1"/>
    <property type="molecule type" value="mRNA"/>
</dbReference>
<dbReference type="EMBL" id="U36576">
    <property type="protein sequence ID" value="AAC52931.1"/>
    <property type="molecule type" value="mRNA"/>
</dbReference>
<dbReference type="EMBL" id="AF289078">
    <property type="protein sequence ID" value="AAK49895.1"/>
    <property type="molecule type" value="mRNA"/>
</dbReference>
<dbReference type="EMBL" id="EU887588">
    <property type="protein sequence ID" value="ACG55608.1"/>
    <property type="molecule type" value="mRNA"/>
</dbReference>
<dbReference type="EMBL" id="AL840639">
    <property type="status" value="NOT_ANNOTATED_CDS"/>
    <property type="molecule type" value="Genomic_DNA"/>
</dbReference>
<dbReference type="EMBL" id="AL844575">
    <property type="status" value="NOT_ANNOTATED_CDS"/>
    <property type="molecule type" value="Genomic_DNA"/>
</dbReference>
<dbReference type="CCDS" id="CCDS17112.1">
    <molecule id="Q60591-3"/>
</dbReference>
<dbReference type="CCDS" id="CCDS50803.1">
    <molecule id="Q60591-2"/>
</dbReference>
<dbReference type="PIR" id="A48753">
    <property type="entry name" value="A48753"/>
</dbReference>
<dbReference type="RefSeq" id="NP_001129545.1">
    <molecule id="Q60591-2"/>
    <property type="nucleotide sequence ID" value="NM_001136073.2"/>
</dbReference>
<dbReference type="RefSeq" id="NP_035029.2">
    <molecule id="Q60591-3"/>
    <property type="nucleotide sequence ID" value="NM_010899.3"/>
</dbReference>
<dbReference type="SMR" id="Q60591"/>
<dbReference type="BioGRID" id="201739">
    <property type="interactions" value="3"/>
</dbReference>
<dbReference type="ComplexPortal" id="CPX-610">
    <property type="entry name" value="AP-1 transcription factor complex FOS-JUN-NFATC2"/>
</dbReference>
<dbReference type="CORUM" id="Q60591"/>
<dbReference type="DIP" id="DIP-49476N"/>
<dbReference type="ELM" id="Q60591"/>
<dbReference type="FunCoup" id="Q60591">
    <property type="interactions" value="1326"/>
</dbReference>
<dbReference type="IntAct" id="Q60591">
    <property type="interactions" value="11"/>
</dbReference>
<dbReference type="STRING" id="10090.ENSMUSP00000074198"/>
<dbReference type="MoonDB" id="Q60591">
    <property type="type" value="Predicted"/>
</dbReference>
<dbReference type="GlyGen" id="Q60591">
    <property type="glycosylation" value="3 sites, 1 O-linked glycan (1 site)"/>
</dbReference>
<dbReference type="iPTMnet" id="Q60591"/>
<dbReference type="PhosphoSitePlus" id="Q60591"/>
<dbReference type="jPOST" id="Q60591"/>
<dbReference type="PaxDb" id="10090-ENSMUSP00000074198"/>
<dbReference type="PeptideAtlas" id="Q60591"/>
<dbReference type="ProteomicsDB" id="287400">
    <molecule id="Q60591-3"/>
</dbReference>
<dbReference type="ProteomicsDB" id="287401">
    <molecule id="Q60591-2"/>
</dbReference>
<dbReference type="ProteomicsDB" id="287402">
    <molecule id="Q60591-4"/>
</dbReference>
<dbReference type="Antibodypedia" id="1758">
    <property type="antibodies" value="531 antibodies from 45 providers"/>
</dbReference>
<dbReference type="DNASU" id="18019"/>
<dbReference type="Ensembl" id="ENSMUST00000074618.10">
    <molecule id="Q60591-3"/>
    <property type="protein sequence ID" value="ENSMUSP00000074198.4"/>
    <property type="gene ID" value="ENSMUSG00000027544.17"/>
</dbReference>
<dbReference type="Ensembl" id="ENSMUST00000109184.8">
    <molecule id="Q60591-2"/>
    <property type="protein sequence ID" value="ENSMUSP00000104812.2"/>
    <property type="gene ID" value="ENSMUSG00000027544.17"/>
</dbReference>
<dbReference type="GeneID" id="18019"/>
<dbReference type="KEGG" id="mmu:18019"/>
<dbReference type="UCSC" id="uc008oau.2">
    <molecule id="Q60591-3"/>
    <property type="organism name" value="mouse"/>
</dbReference>
<dbReference type="AGR" id="MGI:102463"/>
<dbReference type="CTD" id="4773"/>
<dbReference type="MGI" id="MGI:102463">
    <property type="gene designation" value="Nfatc2"/>
</dbReference>
<dbReference type="VEuPathDB" id="HostDB:ENSMUSG00000027544"/>
<dbReference type="eggNOG" id="ENOG502QTJI">
    <property type="taxonomic scope" value="Eukaryota"/>
</dbReference>
<dbReference type="GeneTree" id="ENSGT00940000156230"/>
<dbReference type="HOGENOM" id="CLU_010185_1_0_1"/>
<dbReference type="InParanoid" id="Q60591"/>
<dbReference type="OMA" id="PAIPICX"/>
<dbReference type="OrthoDB" id="5346094at2759"/>
<dbReference type="PhylomeDB" id="Q60591"/>
<dbReference type="TreeFam" id="TF326480"/>
<dbReference type="Reactome" id="R-MMU-2025928">
    <property type="pathway name" value="Calcineurin activates NFAT"/>
</dbReference>
<dbReference type="Reactome" id="R-MMU-2871809">
    <property type="pathway name" value="FCERI mediated Ca+2 mobilization"/>
</dbReference>
<dbReference type="Reactome" id="R-MMU-5607763">
    <property type="pathway name" value="CLEC7A (Dectin-1) induces NFAT activation"/>
</dbReference>
<dbReference type="BioGRID-ORCS" id="18019">
    <property type="hits" value="6 hits in 80 CRISPR screens"/>
</dbReference>
<dbReference type="ChiTaRS" id="Nfatc2">
    <property type="organism name" value="mouse"/>
</dbReference>
<dbReference type="PRO" id="PR:Q60591"/>
<dbReference type="Proteomes" id="UP000000589">
    <property type="component" value="Chromosome 2"/>
</dbReference>
<dbReference type="RNAct" id="Q60591">
    <property type="molecule type" value="protein"/>
</dbReference>
<dbReference type="Bgee" id="ENSMUSG00000027544">
    <property type="expression patterns" value="Expressed in lumbar subsegment of spinal cord and 209 other cell types or tissues"/>
</dbReference>
<dbReference type="ExpressionAtlas" id="Q60591">
    <property type="expression patterns" value="baseline and differential"/>
</dbReference>
<dbReference type="GO" id="GO:0000785">
    <property type="term" value="C:chromatin"/>
    <property type="evidence" value="ECO:0000314"/>
    <property type="project" value="BHF-UCL"/>
</dbReference>
<dbReference type="GO" id="GO:0005737">
    <property type="term" value="C:cytoplasm"/>
    <property type="evidence" value="ECO:0000314"/>
    <property type="project" value="UniProtKB"/>
</dbReference>
<dbReference type="GO" id="GO:0005829">
    <property type="term" value="C:cytosol"/>
    <property type="evidence" value="ECO:0000314"/>
    <property type="project" value="MGI"/>
</dbReference>
<dbReference type="GO" id="GO:0005654">
    <property type="term" value="C:nucleoplasm"/>
    <property type="evidence" value="ECO:0000304"/>
    <property type="project" value="Reactome"/>
</dbReference>
<dbReference type="GO" id="GO:0005634">
    <property type="term" value="C:nucleus"/>
    <property type="evidence" value="ECO:0000314"/>
    <property type="project" value="UniProtKB"/>
</dbReference>
<dbReference type="GO" id="GO:1990904">
    <property type="term" value="C:ribonucleoprotein complex"/>
    <property type="evidence" value="ECO:0000314"/>
    <property type="project" value="MGI"/>
</dbReference>
<dbReference type="GO" id="GO:0035976">
    <property type="term" value="C:transcription factor AP-1 complex"/>
    <property type="evidence" value="ECO:0000266"/>
    <property type="project" value="ComplexPortal"/>
</dbReference>
<dbReference type="GO" id="GO:0005667">
    <property type="term" value="C:transcription regulator complex"/>
    <property type="evidence" value="ECO:0000314"/>
    <property type="project" value="MGI"/>
</dbReference>
<dbReference type="GO" id="GO:0003682">
    <property type="term" value="F:chromatin binding"/>
    <property type="evidence" value="ECO:0000314"/>
    <property type="project" value="MGI"/>
</dbReference>
<dbReference type="GO" id="GO:0001228">
    <property type="term" value="F:DNA-binding transcription activator activity, RNA polymerase II-specific"/>
    <property type="evidence" value="ECO:0000314"/>
    <property type="project" value="MGI"/>
</dbReference>
<dbReference type="GO" id="GO:0003700">
    <property type="term" value="F:DNA-binding transcription factor activity"/>
    <property type="evidence" value="ECO:0000314"/>
    <property type="project" value="MGI"/>
</dbReference>
<dbReference type="GO" id="GO:0000981">
    <property type="term" value="F:DNA-binding transcription factor activity, RNA polymerase II-specific"/>
    <property type="evidence" value="ECO:0000314"/>
    <property type="project" value="BHF-UCL"/>
</dbReference>
<dbReference type="GO" id="GO:0001227">
    <property type="term" value="F:DNA-binding transcription repressor activity, RNA polymerase II-specific"/>
    <property type="evidence" value="ECO:0000314"/>
    <property type="project" value="NTNU_SB"/>
</dbReference>
<dbReference type="GO" id="GO:0019902">
    <property type="term" value="F:phosphatase binding"/>
    <property type="evidence" value="ECO:0007669"/>
    <property type="project" value="Ensembl"/>
</dbReference>
<dbReference type="GO" id="GO:0000978">
    <property type="term" value="F:RNA polymerase II cis-regulatory region sequence-specific DNA binding"/>
    <property type="evidence" value="ECO:0000314"/>
    <property type="project" value="NTNU_SB"/>
</dbReference>
<dbReference type="GO" id="GO:0043565">
    <property type="term" value="F:sequence-specific DNA binding"/>
    <property type="evidence" value="ECO:0000314"/>
    <property type="project" value="MGI"/>
</dbReference>
<dbReference type="GO" id="GO:0000976">
    <property type="term" value="F:transcription cis-regulatory region binding"/>
    <property type="evidence" value="ECO:0000314"/>
    <property type="project" value="UniProtKB"/>
</dbReference>
<dbReference type="GO" id="GO:0050853">
    <property type="term" value="P:B cell receptor signaling pathway"/>
    <property type="evidence" value="ECO:0007669"/>
    <property type="project" value="Ensembl"/>
</dbReference>
<dbReference type="GO" id="GO:0033173">
    <property type="term" value="P:calcineurin-NFAT signaling cascade"/>
    <property type="evidence" value="ECO:0000316"/>
    <property type="project" value="MGI"/>
</dbReference>
<dbReference type="GO" id="GO:0051216">
    <property type="term" value="P:cartilage development"/>
    <property type="evidence" value="ECO:0000315"/>
    <property type="project" value="UniProtKB"/>
</dbReference>
<dbReference type="GO" id="GO:0016477">
    <property type="term" value="P:cell migration"/>
    <property type="evidence" value="ECO:0000250"/>
    <property type="project" value="UniProtKB"/>
</dbReference>
<dbReference type="GO" id="GO:0071277">
    <property type="term" value="P:cellular response to calcium ion"/>
    <property type="evidence" value="ECO:0000314"/>
    <property type="project" value="MGI"/>
</dbReference>
<dbReference type="GO" id="GO:0006974">
    <property type="term" value="P:DNA damage response"/>
    <property type="evidence" value="ECO:0007669"/>
    <property type="project" value="Ensembl"/>
</dbReference>
<dbReference type="GO" id="GO:0010467">
    <property type="term" value="P:gene expression"/>
    <property type="evidence" value="ECO:0000315"/>
    <property type="project" value="MGI"/>
</dbReference>
<dbReference type="GO" id="GO:0140742">
    <property type="term" value="P:lncRNA transcription"/>
    <property type="evidence" value="ECO:0000315"/>
    <property type="project" value="MGI"/>
</dbReference>
<dbReference type="GO" id="GO:0014904">
    <property type="term" value="P:myotube cell development"/>
    <property type="evidence" value="ECO:0000315"/>
    <property type="project" value="MGI"/>
</dbReference>
<dbReference type="GO" id="GO:0000122">
    <property type="term" value="P:negative regulation of transcription by RNA polymerase II"/>
    <property type="evidence" value="ECO:0000314"/>
    <property type="project" value="NTNU_SB"/>
</dbReference>
<dbReference type="GO" id="GO:1905064">
    <property type="term" value="P:negative regulation of vascular associated smooth muscle cell differentiation"/>
    <property type="evidence" value="ECO:0007669"/>
    <property type="project" value="Ensembl"/>
</dbReference>
<dbReference type="GO" id="GO:0030890">
    <property type="term" value="P:positive regulation of B cell proliferation"/>
    <property type="evidence" value="ECO:0007669"/>
    <property type="project" value="Ensembl"/>
</dbReference>
<dbReference type="GO" id="GO:0045893">
    <property type="term" value="P:positive regulation of DNA-templated transcription"/>
    <property type="evidence" value="ECO:0000266"/>
    <property type="project" value="MGI"/>
</dbReference>
<dbReference type="GO" id="GO:0010628">
    <property type="term" value="P:positive regulation of gene expression"/>
    <property type="evidence" value="ECO:0000315"/>
    <property type="project" value="UniProtKB"/>
</dbReference>
<dbReference type="GO" id="GO:1901741">
    <property type="term" value="P:positive regulation of myoblast fusion"/>
    <property type="evidence" value="ECO:0000315"/>
    <property type="project" value="MGI"/>
</dbReference>
<dbReference type="GO" id="GO:0045944">
    <property type="term" value="P:positive regulation of transcription by RNA polymerase II"/>
    <property type="evidence" value="ECO:0000314"/>
    <property type="project" value="MGI"/>
</dbReference>
<dbReference type="GO" id="GO:0006357">
    <property type="term" value="P:regulation of transcription by RNA polymerase II"/>
    <property type="evidence" value="ECO:0000303"/>
    <property type="project" value="ComplexPortal"/>
</dbReference>
<dbReference type="GO" id="GO:0009410">
    <property type="term" value="P:response to xenobiotic stimulus"/>
    <property type="evidence" value="ECO:0007669"/>
    <property type="project" value="Ensembl"/>
</dbReference>
<dbReference type="GO" id="GO:0006366">
    <property type="term" value="P:transcription by RNA polymerase II"/>
    <property type="evidence" value="ECO:0000316"/>
    <property type="project" value="MGI"/>
</dbReference>
<dbReference type="CDD" id="cd01178">
    <property type="entry name" value="IPT_NFAT"/>
    <property type="match status" value="1"/>
</dbReference>
<dbReference type="CDD" id="cd07881">
    <property type="entry name" value="RHD-n_NFAT"/>
    <property type="match status" value="1"/>
</dbReference>
<dbReference type="FunFam" id="2.60.40.10:FF:000040">
    <property type="entry name" value="Nuclear factor of activated T-cells, cytoplasmic, calcineurin-dependent 2"/>
    <property type="match status" value="1"/>
</dbReference>
<dbReference type="FunFam" id="2.60.40.340:FF:000001">
    <property type="entry name" value="Nuclear factor of activated T-cells, cytoplasmic, calcineurin-dependent 2"/>
    <property type="match status" value="1"/>
</dbReference>
<dbReference type="Gene3D" id="2.60.40.10">
    <property type="entry name" value="Immunoglobulins"/>
    <property type="match status" value="1"/>
</dbReference>
<dbReference type="Gene3D" id="2.60.40.340">
    <property type="entry name" value="Rel homology domain (RHD), DNA-binding domain"/>
    <property type="match status" value="1"/>
</dbReference>
<dbReference type="InterPro" id="IPR013783">
    <property type="entry name" value="Ig-like_fold"/>
</dbReference>
<dbReference type="InterPro" id="IPR014756">
    <property type="entry name" value="Ig_E-set"/>
</dbReference>
<dbReference type="InterPro" id="IPR002909">
    <property type="entry name" value="IPT_dom"/>
</dbReference>
<dbReference type="InterPro" id="IPR008366">
    <property type="entry name" value="NFAT"/>
</dbReference>
<dbReference type="InterPro" id="IPR008967">
    <property type="entry name" value="p53-like_TF_DNA-bd_sf"/>
</dbReference>
<dbReference type="InterPro" id="IPR032397">
    <property type="entry name" value="RHD_dimer"/>
</dbReference>
<dbReference type="InterPro" id="IPR011539">
    <property type="entry name" value="RHD_DNA_bind_dom"/>
</dbReference>
<dbReference type="InterPro" id="IPR037059">
    <property type="entry name" value="RHD_DNA_bind_dom_sf"/>
</dbReference>
<dbReference type="PANTHER" id="PTHR12533">
    <property type="entry name" value="NFAT"/>
    <property type="match status" value="1"/>
</dbReference>
<dbReference type="PANTHER" id="PTHR12533:SF4">
    <property type="entry name" value="NUCLEAR FACTOR OF ACTIVATED T-CELLS, CYTOPLASMIC 2"/>
    <property type="match status" value="1"/>
</dbReference>
<dbReference type="Pfam" id="PF16179">
    <property type="entry name" value="RHD_dimer"/>
    <property type="match status" value="1"/>
</dbReference>
<dbReference type="Pfam" id="PF00554">
    <property type="entry name" value="RHD_DNA_bind"/>
    <property type="match status" value="1"/>
</dbReference>
<dbReference type="PRINTS" id="PR01789">
    <property type="entry name" value="NUCFACTORATC"/>
</dbReference>
<dbReference type="SMART" id="SM00429">
    <property type="entry name" value="IPT"/>
    <property type="match status" value="1"/>
</dbReference>
<dbReference type="SUPFAM" id="SSF81296">
    <property type="entry name" value="E set domains"/>
    <property type="match status" value="1"/>
</dbReference>
<dbReference type="SUPFAM" id="SSF49417">
    <property type="entry name" value="p53-like transcription factors"/>
    <property type="match status" value="1"/>
</dbReference>
<dbReference type="PROSITE" id="PS50254">
    <property type="entry name" value="REL_2"/>
    <property type="match status" value="1"/>
</dbReference>
<organism>
    <name type="scientific">Mus musculus</name>
    <name type="common">Mouse</name>
    <dbReference type="NCBI Taxonomy" id="10090"/>
    <lineage>
        <taxon>Eukaryota</taxon>
        <taxon>Metazoa</taxon>
        <taxon>Chordata</taxon>
        <taxon>Craniata</taxon>
        <taxon>Vertebrata</taxon>
        <taxon>Euteleostomi</taxon>
        <taxon>Mammalia</taxon>
        <taxon>Eutheria</taxon>
        <taxon>Euarchontoglires</taxon>
        <taxon>Glires</taxon>
        <taxon>Rodentia</taxon>
        <taxon>Myomorpha</taxon>
        <taxon>Muroidea</taxon>
        <taxon>Muridae</taxon>
        <taxon>Murinae</taxon>
        <taxon>Mus</taxon>
        <taxon>Mus</taxon>
    </lineage>
</organism>
<feature type="chain" id="PRO_0000205179" description="Nuclear factor of activated T-cells, cytoplasmic 2">
    <location>
        <begin position="1"/>
        <end position="927"/>
    </location>
</feature>
<feature type="repeat" description="1">
    <location>
        <begin position="186"/>
        <end position="202"/>
    </location>
</feature>
<feature type="repeat" description="2">
    <location>
        <begin position="215"/>
        <end position="231"/>
    </location>
</feature>
<feature type="repeat" description="3; approximate">
    <location>
        <begin position="274"/>
        <end position="290"/>
    </location>
</feature>
<feature type="domain" description="RHD" evidence="3">
    <location>
        <begin position="394"/>
        <end position="576"/>
    </location>
</feature>
<feature type="DNA-binding region">
    <location>
        <begin position="423"/>
        <end position="430"/>
    </location>
</feature>
<feature type="region of interest" description="Disordered" evidence="4">
    <location>
        <begin position="1"/>
        <end position="29"/>
    </location>
</feature>
<feature type="region of interest" description="Calcineurin-binding" evidence="2">
    <location>
        <begin position="111"/>
        <end position="116"/>
    </location>
</feature>
<feature type="region of interest" description="Transactivation domain A (TAD-A)">
    <location>
        <begin position="119"/>
        <end position="201"/>
    </location>
</feature>
<feature type="region of interest" description="Required for cytoplasmic retention of the phosphorylated form">
    <location>
        <begin position="163"/>
        <end position="177"/>
    </location>
</feature>
<feature type="region of interest" description="3 X approximate SP repeats">
    <location>
        <begin position="186"/>
        <end position="292"/>
    </location>
</feature>
<feature type="region of interest" description="Disordered" evidence="4">
    <location>
        <begin position="203"/>
        <end position="299"/>
    </location>
</feature>
<feature type="region of interest" description="Disordered" evidence="4">
    <location>
        <begin position="322"/>
        <end position="341"/>
    </location>
</feature>
<feature type="region of interest" description="Disordered" evidence="4">
    <location>
        <begin position="790"/>
        <end position="812"/>
    </location>
</feature>
<feature type="region of interest" description="Disordered" evidence="4">
    <location>
        <begin position="841"/>
        <end position="903"/>
    </location>
</feature>
<feature type="short sequence motif" description="Nuclear localization signal">
    <location>
        <begin position="253"/>
        <end position="255"/>
    </location>
</feature>
<feature type="compositionally biased region" description="Polar residues" evidence="4">
    <location>
        <begin position="216"/>
        <end position="226"/>
    </location>
</feature>
<feature type="compositionally biased region" description="Low complexity" evidence="4">
    <location>
        <begin position="267"/>
        <end position="277"/>
    </location>
</feature>
<feature type="compositionally biased region" description="Polar residues" evidence="4">
    <location>
        <begin position="798"/>
        <end position="812"/>
    </location>
</feature>
<feature type="modified residue" description="Phosphoserine" evidence="2">
    <location>
        <position position="23"/>
    </location>
</feature>
<feature type="modified residue" description="Phosphoserine" evidence="20">
    <location>
        <position position="53"/>
    </location>
</feature>
<feature type="modified residue" description="Phosphoserine" evidence="20">
    <location>
        <position position="54"/>
    </location>
</feature>
<feature type="modified residue" description="Phosphoserine" evidence="20">
    <location>
        <position position="56"/>
    </location>
</feature>
<feature type="modified residue" description="Phosphoserine" evidence="6">
    <location>
        <position position="99"/>
    </location>
</feature>
<feature type="modified residue" description="Phosphoserine" evidence="2">
    <location>
        <position position="107"/>
    </location>
</feature>
<feature type="modified residue" description="Phosphoserine" evidence="2">
    <location>
        <position position="110"/>
    </location>
</feature>
<feature type="modified residue" description="Phosphoserine" evidence="6 22">
    <location>
        <position position="136"/>
    </location>
</feature>
<feature type="modified residue" description="Phosphoserine" evidence="2">
    <location>
        <position position="150"/>
    </location>
</feature>
<feature type="modified residue" description="Phosphoserine" evidence="21">
    <location>
        <position position="170"/>
    </location>
</feature>
<feature type="modified residue" description="Phosphoserine" evidence="21">
    <location>
        <position position="173"/>
    </location>
</feature>
<feature type="modified residue" description="Phosphoserine" evidence="21">
    <location>
        <position position="174"/>
    </location>
</feature>
<feature type="modified residue" description="Phosphoserine" evidence="21">
    <location>
        <position position="176"/>
    </location>
</feature>
<feature type="modified residue" description="Phosphoserine" evidence="21">
    <location>
        <position position="177"/>
    </location>
</feature>
<feature type="modified residue" description="Phosphoserine" evidence="21">
    <location>
        <position position="179"/>
    </location>
</feature>
<feature type="modified residue" description="Phosphoserine" evidence="21">
    <location>
        <position position="182"/>
    </location>
</feature>
<feature type="modified residue" description="Phosphoserine" evidence="6">
    <location>
        <position position="215"/>
    </location>
</feature>
<feature type="modified residue" description="Phosphoserine" evidence="6">
    <location>
        <position position="219"/>
    </location>
</feature>
<feature type="modified residue" description="Phosphoserine" evidence="6">
    <location>
        <position position="223"/>
    </location>
</feature>
<feature type="modified residue" description="Phosphoserine" evidence="6">
    <location>
        <position position="238"/>
    </location>
</feature>
<feature type="modified residue" description="Phosphoserine" evidence="6">
    <location>
        <position position="245"/>
    </location>
</feature>
<feature type="modified residue" description="Phosphoserine" evidence="22">
    <location>
        <position position="257"/>
    </location>
</feature>
<feature type="modified residue" description="Phosphoserine" evidence="6">
    <location>
        <position position="270"/>
    </location>
</feature>
<feature type="modified residue" description="Phosphoserine" evidence="6">
    <location>
        <position position="276"/>
    </location>
</feature>
<feature type="modified residue" description="Phosphoserine" evidence="6">
    <location>
        <position position="278"/>
    </location>
</feature>
<feature type="modified residue" description="Phosphoserine" evidence="6">
    <location>
        <position position="282"/>
    </location>
</feature>
<feature type="modified residue" description="Phosphoserine" evidence="6">
    <location>
        <position position="328"/>
    </location>
</feature>
<feature type="modified residue" description="Phosphoserine" evidence="6 22">
    <location>
        <position position="365"/>
    </location>
</feature>
<feature type="modified residue" description="Phosphoserine" evidence="2">
    <location>
        <position position="757"/>
    </location>
</feature>
<feature type="modified residue" description="Phosphoserine" evidence="2">
    <location>
        <position position="759"/>
    </location>
</feature>
<feature type="modified residue" description="Phosphoserine" evidence="2">
    <location>
        <position position="761"/>
    </location>
</feature>
<feature type="modified residue" description="Phosphoserine" evidence="2">
    <location>
        <position position="860"/>
    </location>
</feature>
<feature type="splice variant" id="VSP_005597" description="In isoform D." evidence="18">
    <original>DGQQIWEMEATVDKDKSQPNMLFVEIPEYRNKHIRVPVKVNFYVINGKRKRSQPQHFTYHPVPAIKTEPSDEYEPSLICSPAHGGLGSQPYYPQHPMLAESPSCLVATMAPCQQFRSGLSSPDARYQQQSPAAALYQRSKSLSPGLLGYQQPSLLAAPLGLADAHRSVLVHAGSQGQGQGSTLPHTSS</original>
    <variation>GPAGTCETRPLPISLISADRLSPWLSRLQRNPPGSVFRCSVLLPAPGSSLVLLAL</variation>
    <location>
        <begin position="619"/>
        <end position="806"/>
    </location>
</feature>
<feature type="splice variant" id="VSP_005596" description="In isoform B." evidence="19">
    <original>VNEIIRKEFSGPPSRNQT</original>
    <variation>ELIDTHLSWIQNIL</variation>
    <location>
        <begin position="910"/>
        <end position="927"/>
    </location>
</feature>
<feature type="mutagenesis site" description="Lowers dephosphorylation." evidence="17">
    <original>R</original>
    <variation>A</variation>
    <location>
        <position position="112"/>
    </location>
</feature>
<feature type="mutagenesis site" description="Lowers dephosphorylation." evidence="17">
    <original>E</original>
    <variation>A</variation>
    <location>
        <position position="114"/>
    </location>
</feature>
<feature type="mutagenesis site" description="No dephosphorylation." evidence="17">
    <original>T</original>
    <variation>A</variation>
    <location>
        <position position="116"/>
    </location>
</feature>
<feature type="mutagenesis site" description="Induces aberrant nuclear localization of the phosphorylated form." evidence="6">
    <original>R</original>
    <variation>A</variation>
    <location>
        <position position="164"/>
    </location>
</feature>
<feature type="mutagenesis site" description="Decrease in binding to DNA." evidence="15">
    <original>R</original>
    <variation>A</variation>
    <location>
        <position position="423"/>
    </location>
</feature>
<feature type="mutagenesis site" description="No change in binding to DNA." evidence="15">
    <original>H</original>
    <variation>A</variation>
    <location>
        <position position="425"/>
    </location>
</feature>
<feature type="mutagenesis site" description="Decrease in binding to DNA." evidence="15">
    <original>Y</original>
    <variation>A</variation>
    <location>
        <position position="426"/>
    </location>
</feature>
<feature type="mutagenesis site" description="No change in binding to DNA." evidence="15">
    <original>T</original>
    <variation>A</variation>
    <location>
        <position position="428"/>
    </location>
</feature>
<feature type="mutagenesis site" description="No change in binding to DNA and confers DNA-binding sensitivity to sulfhydryl modifications." evidence="15">
    <original>T</original>
    <variation>C</variation>
    <location>
        <position position="428"/>
    </location>
</feature>
<feature type="mutagenesis site" description="Decrease in binding to DNA." evidence="15">
    <original>E</original>
    <variation>A</variation>
    <location>
        <position position="429"/>
    </location>
</feature>
<feature type="sequence conflict" description="In Ref. 3; AAK49895." evidence="20" ref="3">
    <original>L</original>
    <variation>P</variation>
    <location>
        <position position="78"/>
    </location>
</feature>
<feature type="sequence conflict" description="In Ref. 2; AAC52929/AAC52930/AAC52931." evidence="20" ref="2">
    <original>L</original>
    <variation>P</variation>
    <location>
        <position position="287"/>
    </location>
</feature>
<feature type="sequence conflict" description="In Ref. 2; AAC52929/AAC52930/AAC52931." evidence="20" ref="2">
    <original>P</original>
    <variation>R</variation>
    <location>
        <position position="802"/>
    </location>
</feature>
<keyword id="KW-0010">Activator</keyword>
<keyword id="KW-0025">Alternative splicing</keyword>
<keyword id="KW-0963">Cytoplasm</keyword>
<keyword id="KW-0903">Direct protein sequencing</keyword>
<keyword id="KW-0238">DNA-binding</keyword>
<keyword id="KW-0539">Nucleus</keyword>
<keyword id="KW-0597">Phosphoprotein</keyword>
<keyword id="KW-1185">Reference proteome</keyword>
<keyword id="KW-0677">Repeat</keyword>
<keyword id="KW-0804">Transcription</keyword>
<keyword id="KW-0805">Transcription regulation</keyword>
<keyword id="KW-0832">Ubl conjugation</keyword>
<comment type="function">
    <text evidence="2 5 13 14">Plays a role in the inducible expression of cytokine genes in T cells, especially in the induction of the IL-2, IL-3, IL-4, TNF-alpha or GM-CSF. Promotes invasive migration through the activation of GPC6 expression and WNT5A signaling pathway (By similarity). Is involved in the negative regulation of chondrogenesis (PubMed:10620601). Recruited by AKAP5 to ORAI1 pore-forming subunit of CRAC channels in Ca(2+) signaling microdomains where store-operated Ca(2+) influx is coupled to calmodulin and calcineurin signaling and activation of NFAT-dependent transcriptional responses.</text>
</comment>
<comment type="subunit">
    <text evidence="2 6 10 12 14 16">Member of the multicomponent NFATC transcription complex that consists of at least two components, a pre-existing cytoplasmic component NFATC2 and an inducible nuclear component NFATC1. Other members such as NFATC4, NFATC3 or members of the activating protein-1 family, MAF, GATA4 and Cbp/p300 can also bind the complex. The phosphorylated form specifically interacts with XPO1; which mediates nuclear export. NFATC proteins bind to DNA as monomers. Interacts with NFATC2IP. Interacts with FOXP3 (By similarity). Interacts with TBX21 ('Thr-302' phosphorylated form) (PubMed:23616576). Interacts with KAT2A (PubMed:28424240). Interacts with HOMER2 and HOMER3; this interaction competes with calcineurin/PPP3CA-binding and hence prevents NFATC2 dephosphorylation and activation (By similarity). Interacts with protein phosphatase PPP3CA/calcineurin A (By similarity). Interacts with AKAP5 (via leucine zipper domain); this is required for NFATC2/NFAT1 recruitment to CRAC channels.</text>
</comment>
<comment type="interaction">
    <interactant intactId="EBI-643104">
        <id>Q60591</id>
    </interactant>
    <interactant intactId="EBI-1207633">
        <id>Q86Y07-1</id>
        <label>VRK2</label>
    </interactant>
    <organismsDiffer>true</organismsDiffer>
    <experiments>2</experiments>
</comment>
<comment type="subcellular location">
    <subcellularLocation>
        <location evidence="6 11">Cytoplasm</location>
    </subcellularLocation>
    <subcellularLocation>
        <location evidence="6 11">Nucleus</location>
    </subcellularLocation>
    <text>Cytoplasmic for the phosphorylated form and nuclear after activation that is controlled by calcineurin-mediated dephosphorylation. Rapid nuclear exit of NFATC is thought to be one mechanism by which cells distinguish between sustained and transient calcium signals. The subcellular localization of NFATC plays a key role in the regulation of gene transcription.</text>
</comment>
<comment type="alternative products">
    <event type="alternative splicing"/>
    <isoform>
        <id>Q60591-3</id>
        <name>C</name>
        <sequence type="displayed"/>
    </isoform>
    <isoform>
        <id>Q60591-2</id>
        <name>B</name>
        <sequence type="described" ref="VSP_005596"/>
    </isoform>
    <isoform>
        <id>Q60591-4</id>
        <name>D</name>
        <sequence type="described" ref="VSP_005597"/>
    </isoform>
    <isoform>
        <id>Q60591-1</id>
        <name>A</name>
        <sequence type="not described"/>
    </isoform>
</comment>
<comment type="tissue specificity">
    <text evidence="5 8 9">Expressed in spleen, heart, testis, brain, placenta, muscle and pancreas (PubMed:18675896). Expressed in the thymus (PubMed:17579027, PubMed:18675896). Expressed in the lung (PubMed:17579027). Expressed in cartilage (PubMed:10620601).</text>
</comment>
<comment type="developmental stage">
    <text evidence="5 7">Expressed in the developing heart at 13.5 and 16.5 dpc, during the transition from spongy to compact myocardium (PubMed:17198697). Not detected in the skeletal system at 11 and 13.5 dpc (PubMed:10620601).</text>
</comment>
<comment type="domain">
    <text evidence="1">Rel Similarity Domain (RSD) allows DNA-binding and cooperative interactions with AP1 factors.</text>
</comment>
<comment type="PTM">
    <text evidence="6">In resting cells, phosphorylated by NFATC-kinase on at least 18 sites in the 99-365 region. Upon cell stimulation, all these sites except Ser-245 are dephosphorylated by calcineurin. Dephosphorylation induces a conformational change that simultaneously exposes an NLS and masks an NES, which results in nuclear localization. Simultaneously, one site among Ser-53; Ser-54 and Ser-56 is phosphorylated; which is required for full transcriptional activity.</text>
</comment>
<comment type="PTM">
    <text evidence="2">Ubiquitinated in endothelial cells by RNF213 downstream of the non-canonical Wnt signaling pathway, leading to its degradation by the proteasome.</text>
</comment>
<comment type="disruption phenotype">
    <text evidence="5">NFATC2-knocked down adult animals develop progressive difficulty in ambulation, fixed joint contractures and reduced joint motion, associated with joint destruction and the formation of ectopic cartilage and bone masses. Skeletal morphogenesis is normal during embryonic development. Cartilage cells from NFATC2-knocked down mice display uncontrolled growth consistent with malignant transformation.</text>
</comment>
<comment type="miscellaneous">
    <molecule>Isoform A</molecule>
    <text evidence="20">PubMed:8668213 (AAC52929) sequence is a chimeric cDNA.</text>
</comment>
<comment type="sequence caution" evidence="20">
    <conflict type="miscellaneous discrepancy">
        <sequence resource="EMBL-CDS" id="AAC52929"/>
    </conflict>
    <text>Chimeric cDNA fused with Phyhd1 (Lrrc8a).</text>
</comment>
<name>NFAC2_MOUSE</name>
<protein>
    <recommendedName>
        <fullName>Nuclear factor of activated T-cells, cytoplasmic 2</fullName>
        <shortName>NF-ATc2</shortName>
        <shortName>NFATc2</shortName>
    </recommendedName>
    <alternativeName>
        <fullName>NFAT pre-existing subunit</fullName>
        <shortName>NF-ATp</shortName>
    </alternativeName>
    <alternativeName>
        <fullName>T-cell transcription factor NFAT1</fullName>
    </alternativeName>
</protein>
<sequence length="927" mass="100020">MDVPEPQPDPDGGDGPGHEPGGSPQDELDFSILFDYDYLNPIEEEPIAHKAISSPSGLAYPDDVLDYGLKPCNPLASLSGEPPGRFGEPDSIGFQNFLSPVKPAGASGPSPRIEITPSHELMQAGGALRGRDAGLSPEQPALALAGVAASPRFTLPVPGYEGYREPLCLSPASSGSSASFISDTFSPYTSPCVSPNNAGPDDLCPQFQNIPAHYSPRTSPIMSPRTSLAEDSCLGRHSPVPRPASRSSSPGAKRRHSCAEALVAPLPAASPQRSRSPSPQPSPHVALQDDSIPAGYPPTAGSAVLMDALNTLATDSPCGIPSKIWKTSPDPTPVSTAPSKAGLARHIYPTVEFLGPCEQEERRNSAPESILLVPPTWPKQLVPAIPICSIPVTASLPPLEWPLSNQSGSYELRIEVQPKPHHRAHYETEGSRGAVKAPTGGHPVVQLHGYMENKPLGLQIFIGTADERILKPHAFYQVHRITGKTVTTTSYEKIVGNTKVLEIPLEPKNNMRATIDCAGILKLRNADIELRKGETDIGRKNTRVRLVFRVHVPEPSGRIVSLQAASNPIECSQRSAHELPMVERQDMDSCLVYGGQQMILTGQNFTAESKVVFMEKTTDGQQIWEMEATVDKDKSQPNMLFVEIPEYRNKHIRVPVKVNFYVINGKRKRSQPQHFTYHPVPAIKTEPSDEYEPSLICSPAHGGLGSQPYYPQHPMLAESPSCLVATMAPCQQFRSGLSSPDARYQQQSPAAALYQRSKSLSPGLLGYQQPSLLAAPLGLADAHRSVLVHAGSQGQGQGSTLPHTSSASQQASPVIHYSPTNQQLRGGGHQEFQHIMYCENFGPSSARPGPPPINQGQRLSPGAYPTVIQQQTAPSQRAAKNGPSDQKEALPTGVTVKQEQNLDQTYLDDVNEIIRKEFSGPPSRNQT</sequence>
<gene>
    <name type="primary">Nfatc2</name>
    <name type="synonym">Nfat1</name>
    <name type="synonym">Nfatp</name>
</gene>